<gene>
    <name type="primary">Galnt5</name>
</gene>
<evidence type="ECO:0000250" key="1"/>
<evidence type="ECO:0000250" key="2">
    <source>
        <dbReference type="UniProtKB" id="Q7Z7M9"/>
    </source>
</evidence>
<evidence type="ECO:0000255" key="3"/>
<evidence type="ECO:0000255" key="4">
    <source>
        <dbReference type="PROSITE-ProRule" id="PRU00174"/>
    </source>
</evidence>
<evidence type="ECO:0000256" key="5">
    <source>
        <dbReference type="SAM" id="MobiDB-lite"/>
    </source>
</evidence>
<evidence type="ECO:0000269" key="6">
    <source>
    </source>
</evidence>
<evidence type="ECO:0000305" key="7"/>
<keyword id="KW-1015">Disulfide bond</keyword>
<keyword id="KW-0325">Glycoprotein</keyword>
<keyword id="KW-0328">Glycosyltransferase</keyword>
<keyword id="KW-0333">Golgi apparatus</keyword>
<keyword id="KW-0430">Lectin</keyword>
<keyword id="KW-0464">Manganese</keyword>
<keyword id="KW-0472">Membrane</keyword>
<keyword id="KW-0479">Metal-binding</keyword>
<keyword id="KW-0597">Phosphoprotein</keyword>
<keyword id="KW-1185">Reference proteome</keyword>
<keyword id="KW-0735">Signal-anchor</keyword>
<keyword id="KW-0808">Transferase</keyword>
<keyword id="KW-0812">Transmembrane</keyword>
<keyword id="KW-1133">Transmembrane helix</keyword>
<organism>
    <name type="scientific">Rattus norvegicus</name>
    <name type="common">Rat</name>
    <dbReference type="NCBI Taxonomy" id="10116"/>
    <lineage>
        <taxon>Eukaryota</taxon>
        <taxon>Metazoa</taxon>
        <taxon>Chordata</taxon>
        <taxon>Craniata</taxon>
        <taxon>Vertebrata</taxon>
        <taxon>Euteleostomi</taxon>
        <taxon>Mammalia</taxon>
        <taxon>Eutheria</taxon>
        <taxon>Euarchontoglires</taxon>
        <taxon>Glires</taxon>
        <taxon>Rodentia</taxon>
        <taxon>Myomorpha</taxon>
        <taxon>Muroidea</taxon>
        <taxon>Muridae</taxon>
        <taxon>Murinae</taxon>
        <taxon>Rattus</taxon>
    </lineage>
</organism>
<reference key="1">
    <citation type="journal article" date="1998" name="J. Biol. Chem.">
        <title>Cloning and expression of a novel, tissue specifically expressed member of the UDP-GalNAc:polypeptide N-acetylgalactosaminyltransferase family.</title>
        <authorList>
            <person name="Ten Hagen K.G."/>
            <person name="Hagen F.K."/>
            <person name="Balys M.M."/>
            <person name="Beres T.M."/>
            <person name="Van Wuyckhuyse B."/>
            <person name="Tabak L.A."/>
        </authorList>
    </citation>
    <scope>NUCLEOTIDE SEQUENCE [MRNA]</scope>
    <scope>ENZYME ACTIVITY</scope>
    <scope>TISSUE SPECIFICITY</scope>
    <source>
        <strain>Sprague-Dawley</strain>
        <tissue>Sublingual gland</tissue>
    </source>
</reference>
<dbReference type="EC" id="2.4.1.41"/>
<dbReference type="EMBL" id="AF049344">
    <property type="protein sequence ID" value="AAC69708.1"/>
    <property type="molecule type" value="mRNA"/>
</dbReference>
<dbReference type="RefSeq" id="NP_113984.1">
    <property type="nucleotide sequence ID" value="NM_031796.1"/>
</dbReference>
<dbReference type="SMR" id="O88422"/>
<dbReference type="FunCoup" id="O88422">
    <property type="interactions" value="47"/>
</dbReference>
<dbReference type="STRING" id="10116.ENSRNOP00000006319"/>
<dbReference type="CAZy" id="CBM13">
    <property type="family name" value="Carbohydrate-Binding Module Family 13"/>
</dbReference>
<dbReference type="CAZy" id="GT27">
    <property type="family name" value="Glycosyltransferase Family 27"/>
</dbReference>
<dbReference type="GlyCosmos" id="O88422">
    <property type="glycosylation" value="12 sites, No reported glycans"/>
</dbReference>
<dbReference type="GlyGen" id="O88422">
    <property type="glycosylation" value="12 sites"/>
</dbReference>
<dbReference type="PhosphoSitePlus" id="O88422"/>
<dbReference type="PaxDb" id="10116-ENSRNOP00000006319"/>
<dbReference type="Ensembl" id="ENSRNOT00000006319.4">
    <property type="protein sequence ID" value="ENSRNOP00000006319.1"/>
    <property type="gene ID" value="ENSRNOG00000004645.4"/>
</dbReference>
<dbReference type="GeneID" id="83627"/>
<dbReference type="KEGG" id="rno:83627"/>
<dbReference type="UCSC" id="RGD:620361">
    <property type="organism name" value="rat"/>
</dbReference>
<dbReference type="AGR" id="RGD:620361"/>
<dbReference type="CTD" id="11227"/>
<dbReference type="RGD" id="620361">
    <property type="gene designation" value="Galnt5"/>
</dbReference>
<dbReference type="eggNOG" id="KOG3736">
    <property type="taxonomic scope" value="Eukaryota"/>
</dbReference>
<dbReference type="GeneTree" id="ENSGT00940000159241"/>
<dbReference type="HOGENOM" id="CLU_013477_1_0_1"/>
<dbReference type="InParanoid" id="O88422"/>
<dbReference type="OMA" id="HGMHHVL"/>
<dbReference type="OrthoDB" id="52738at9989"/>
<dbReference type="PhylomeDB" id="O88422"/>
<dbReference type="TreeFam" id="TF313267"/>
<dbReference type="BRENDA" id="2.4.1.41">
    <property type="organism ID" value="5301"/>
</dbReference>
<dbReference type="Reactome" id="R-RNO-913709">
    <property type="pathway name" value="O-linked glycosylation of mucins"/>
</dbReference>
<dbReference type="UniPathway" id="UPA00378"/>
<dbReference type="PRO" id="PR:O88422"/>
<dbReference type="Proteomes" id="UP000002494">
    <property type="component" value="Chromosome 3"/>
</dbReference>
<dbReference type="Bgee" id="ENSRNOG00000004645">
    <property type="expression patterns" value="Expressed in jejunum and 12 other cell types or tissues"/>
</dbReference>
<dbReference type="GO" id="GO:0005794">
    <property type="term" value="C:Golgi apparatus"/>
    <property type="evidence" value="ECO:0000318"/>
    <property type="project" value="GO_Central"/>
</dbReference>
<dbReference type="GO" id="GO:0000139">
    <property type="term" value="C:Golgi membrane"/>
    <property type="evidence" value="ECO:0007669"/>
    <property type="project" value="UniProtKB-SubCell"/>
</dbReference>
<dbReference type="GO" id="GO:0030246">
    <property type="term" value="F:carbohydrate binding"/>
    <property type="evidence" value="ECO:0007669"/>
    <property type="project" value="UniProtKB-KW"/>
</dbReference>
<dbReference type="GO" id="GO:0046872">
    <property type="term" value="F:metal ion binding"/>
    <property type="evidence" value="ECO:0007669"/>
    <property type="project" value="UniProtKB-KW"/>
</dbReference>
<dbReference type="GO" id="GO:0004653">
    <property type="term" value="F:polypeptide N-acetylgalactosaminyltransferase activity"/>
    <property type="evidence" value="ECO:0000266"/>
    <property type="project" value="RGD"/>
</dbReference>
<dbReference type="GO" id="GO:0006493">
    <property type="term" value="P:protein O-linked glycosylation"/>
    <property type="evidence" value="ECO:0000318"/>
    <property type="project" value="GO_Central"/>
</dbReference>
<dbReference type="CDD" id="cd02510">
    <property type="entry name" value="pp-GalNAc-T"/>
    <property type="match status" value="1"/>
</dbReference>
<dbReference type="FunFam" id="2.80.10.50:FF:000046">
    <property type="entry name" value="Polypeptide N-acetylgalactosaminyltransferase"/>
    <property type="match status" value="1"/>
</dbReference>
<dbReference type="FunFam" id="3.90.550.10:FF:000088">
    <property type="entry name" value="Polypeptide N-acetylgalactosaminyltransferase"/>
    <property type="match status" value="1"/>
</dbReference>
<dbReference type="Gene3D" id="2.80.10.50">
    <property type="match status" value="1"/>
</dbReference>
<dbReference type="Gene3D" id="3.90.550.10">
    <property type="entry name" value="Spore Coat Polysaccharide Biosynthesis Protein SpsA, Chain A"/>
    <property type="match status" value="1"/>
</dbReference>
<dbReference type="InterPro" id="IPR045885">
    <property type="entry name" value="GalNAc-T"/>
</dbReference>
<dbReference type="InterPro" id="IPR001173">
    <property type="entry name" value="Glyco_trans_2-like"/>
</dbReference>
<dbReference type="InterPro" id="IPR029044">
    <property type="entry name" value="Nucleotide-diphossugar_trans"/>
</dbReference>
<dbReference type="InterPro" id="IPR035992">
    <property type="entry name" value="Ricin_B-like_lectins"/>
</dbReference>
<dbReference type="InterPro" id="IPR000772">
    <property type="entry name" value="Ricin_B_lectin"/>
</dbReference>
<dbReference type="PANTHER" id="PTHR11675">
    <property type="entry name" value="N-ACETYLGALACTOSAMINYLTRANSFERASE"/>
    <property type="match status" value="1"/>
</dbReference>
<dbReference type="PANTHER" id="PTHR11675:SF130">
    <property type="entry name" value="POLYPEPTIDE N-ACETYLGALACTOSAMINYLTRANSFERASE 5"/>
    <property type="match status" value="1"/>
</dbReference>
<dbReference type="Pfam" id="PF00535">
    <property type="entry name" value="Glycos_transf_2"/>
    <property type="match status" value="1"/>
</dbReference>
<dbReference type="Pfam" id="PF00652">
    <property type="entry name" value="Ricin_B_lectin"/>
    <property type="match status" value="1"/>
</dbReference>
<dbReference type="SMART" id="SM00458">
    <property type="entry name" value="RICIN"/>
    <property type="match status" value="1"/>
</dbReference>
<dbReference type="SUPFAM" id="SSF53448">
    <property type="entry name" value="Nucleotide-diphospho-sugar transferases"/>
    <property type="match status" value="1"/>
</dbReference>
<dbReference type="SUPFAM" id="SSF50370">
    <property type="entry name" value="Ricin B-like lectins"/>
    <property type="match status" value="1"/>
</dbReference>
<dbReference type="PROSITE" id="PS50231">
    <property type="entry name" value="RICIN_B_LECTIN"/>
    <property type="match status" value="1"/>
</dbReference>
<feature type="chain" id="PRO_0000059112" description="Polypeptide N-acetylgalactosaminyltransferase 5">
    <location>
        <begin position="1"/>
        <end position="930"/>
    </location>
</feature>
<feature type="topological domain" description="Cytoplasmic" evidence="3">
    <location>
        <begin position="1"/>
        <end position="12"/>
    </location>
</feature>
<feature type="transmembrane region" description="Helical; Signal-anchor for type II membrane protein" evidence="3">
    <location>
        <begin position="13"/>
        <end position="35"/>
    </location>
</feature>
<feature type="topological domain" description="Lumenal" evidence="3">
    <location>
        <begin position="36"/>
        <end position="930"/>
    </location>
</feature>
<feature type="domain" description="Ricin B-type lectin" evidence="4">
    <location>
        <begin position="794"/>
        <end position="925"/>
    </location>
</feature>
<feature type="region of interest" description="Disordered" evidence="5">
    <location>
        <begin position="163"/>
        <end position="210"/>
    </location>
</feature>
<feature type="region of interest" description="Disordered" evidence="5">
    <location>
        <begin position="344"/>
        <end position="377"/>
    </location>
</feature>
<feature type="region of interest" description="Catalytic subdomain A">
    <location>
        <begin position="485"/>
        <end position="594"/>
    </location>
</feature>
<feature type="region of interest" description="Catalytic subdomain B">
    <location>
        <begin position="654"/>
        <end position="716"/>
    </location>
</feature>
<feature type="compositionally biased region" description="Basic and acidic residues" evidence="5">
    <location>
        <begin position="180"/>
        <end position="193"/>
    </location>
</feature>
<feature type="compositionally biased region" description="Polar residues" evidence="5">
    <location>
        <begin position="197"/>
        <end position="210"/>
    </location>
</feature>
<feature type="binding site" evidence="1">
    <location>
        <position position="526"/>
    </location>
    <ligand>
        <name>substrate</name>
    </ligand>
</feature>
<feature type="binding site" evidence="1">
    <location>
        <position position="555"/>
    </location>
    <ligand>
        <name>substrate</name>
    </ligand>
</feature>
<feature type="binding site" evidence="1">
    <location>
        <position position="578"/>
    </location>
    <ligand>
        <name>Mn(2+)</name>
        <dbReference type="ChEBI" id="CHEBI:29035"/>
    </ligand>
</feature>
<feature type="binding site" evidence="1">
    <location>
        <position position="579"/>
    </location>
    <ligand>
        <name>substrate</name>
    </ligand>
</feature>
<feature type="binding site" evidence="1">
    <location>
        <position position="580"/>
    </location>
    <ligand>
        <name>Mn(2+)</name>
        <dbReference type="ChEBI" id="CHEBI:29035"/>
    </ligand>
</feature>
<feature type="binding site" evidence="1">
    <location>
        <position position="685"/>
    </location>
    <ligand>
        <name>substrate</name>
    </ligand>
</feature>
<feature type="binding site" evidence="1">
    <location>
        <position position="713"/>
    </location>
    <ligand>
        <name>Mn(2+)</name>
        <dbReference type="ChEBI" id="CHEBI:29035"/>
    </ligand>
</feature>
<feature type="binding site" evidence="1">
    <location>
        <position position="716"/>
    </location>
    <ligand>
        <name>substrate</name>
    </ligand>
</feature>
<feature type="binding site" evidence="1">
    <location>
        <position position="721"/>
    </location>
    <ligand>
        <name>substrate</name>
    </ligand>
</feature>
<feature type="modified residue" description="Phosphoserine" evidence="2">
    <location>
        <position position="285"/>
    </location>
</feature>
<feature type="glycosylation site" description="N-linked (GlcNAc...) asparagine" evidence="3">
    <location>
        <position position="178"/>
    </location>
</feature>
<feature type="glycosylation site" description="N-linked (GlcNAc...) asparagine" evidence="3">
    <location>
        <position position="198"/>
    </location>
</feature>
<feature type="glycosylation site" description="N-linked (GlcNAc...) asparagine" evidence="3">
    <location>
        <position position="213"/>
    </location>
</feature>
<feature type="glycosylation site" description="N-linked (GlcNAc...) asparagine" evidence="3">
    <location>
        <position position="287"/>
    </location>
</feature>
<feature type="glycosylation site" description="N-linked (GlcNAc...) asparagine" evidence="3">
    <location>
        <position position="309"/>
    </location>
</feature>
<feature type="glycosylation site" description="N-linked (GlcNAc...) asparagine" evidence="3">
    <location>
        <position position="387"/>
    </location>
</feature>
<feature type="glycosylation site" description="N-linked (GlcNAc...) asparagine" evidence="3">
    <location>
        <position position="403"/>
    </location>
</feature>
<feature type="glycosylation site" description="N-linked (GlcNAc...) asparagine" evidence="3">
    <location>
        <position position="568"/>
    </location>
</feature>
<feature type="glycosylation site" description="N-linked (GlcNAc...) asparagine" evidence="3">
    <location>
        <position position="766"/>
    </location>
</feature>
<feature type="glycosylation site" description="N-linked (GlcNAc...) asparagine" evidence="3">
    <location>
        <position position="817"/>
    </location>
</feature>
<feature type="glycosylation site" description="N-linked (GlcNAc...) asparagine" evidence="3">
    <location>
        <position position="835"/>
    </location>
</feature>
<feature type="glycosylation site" description="N-linked (GlcNAc...) asparagine" evidence="3">
    <location>
        <position position="902"/>
    </location>
</feature>
<feature type="disulfide bond" evidence="4">
    <location>
        <begin position="476"/>
        <end position="708"/>
    </location>
</feature>
<feature type="disulfide bond" evidence="4">
    <location>
        <begin position="699"/>
        <end position="779"/>
    </location>
</feature>
<feature type="disulfide bond" evidence="4">
    <location>
        <begin position="812"/>
        <end position="825"/>
    </location>
</feature>
<feature type="disulfide bond" evidence="4">
    <location>
        <begin position="848"/>
        <end position="863"/>
    </location>
</feature>
<feature type="disulfide bond" evidence="4">
    <location>
        <begin position="898"/>
        <end position="913"/>
    </location>
</feature>
<accession>O88422</accession>
<sequence>MNKIRKFFRGSGRVLAFIFVASVIWLLFDMAALRLSFSEINTGILKEDIMRREQTGFRVEADQMTILSPSSRGMRPPRNGAGGKESFRKAENRVLKVEENVDQVQRKGKMQFLLGRGKAVSLWHRTHVQTLPVTLPMQKTQGRDSKPEVSSLHMMSKQTTVLGSEKDSFTVSRGVPLNKTAEHTETLDKKQEAPENYNLSSDTSKQASQRALNVTISVRTDRSKQQSQTVTKSSIQFASLPILKPEEVTVTKKTEAQGKDLKYEAHKARPLLKFTADVGHLKKQSTNETGLGVLPEADGAKVAPGKKLNFSESQIVIITKEEGQKTDTKEVPNSKIQTVFPKLLGESQGKHIPRSQSQTLSSPLAPKRAVSQSKPTLAEELHTARSNLTAKATTVGHQQSHANISENPGKHHVLRIDVTLSPRDLNAPGQFGRPVVVPPGKKKEAEQRWKEGNFNVYLSDLIPVDRAIEDTRPAGCAEQLVHNDLPTTSIIMCFVDEVWSALLRSVHSVLNRSPPHLIKEILLVDDFSTKDYLKANLDKYMSQFPKVRILRLKERHGLIRARLAGAQNATGDVLTFLDSHVECNVGWLEPLLERVYLNRKKVACPVIEVINDKDMSYMTVDNFQRGVFTWPMNFGWRTIPPDVIAKNGIKETDIIRCPVMAGGLFSIDKSYFYELGTYDPGLDVWGGENMELSFKVWMCGGEIEIIPCSRVGHIFRNDNPYSFPKDRMKTVERNLVRVAEVWLDEYKELFYGHGDHLIDQGLDVGNLTQQRELRKKLKCQSFKWYLDNVFPDLKAPVVRASGVFINLALGKCVSIKNITVVLEDCDGSSELQQFNYTWVRLIKHGEWCVAPIPDKGSLTLYPCDNRNNRLKWLHRSASAFHPELVDHIVFESYQQLLCMEGNFSQKTLKLAACNPTEPQQKWKFEKYYDV</sequence>
<protein>
    <recommendedName>
        <fullName>Polypeptide N-acetylgalactosaminyltransferase 5</fullName>
        <ecNumber>2.4.1.41</ecNumber>
    </recommendedName>
    <alternativeName>
        <fullName>Polypeptide GalNAc transferase 5</fullName>
        <shortName>GalNAc-T5</shortName>
        <shortName>pp-GaNTase 5</shortName>
    </alternativeName>
    <alternativeName>
        <fullName>Protein-UDP acetylgalactosaminyltransferase 5</fullName>
    </alternativeName>
    <alternativeName>
        <fullName>UDP-GalNAc:polypeptide N-acetylgalactosaminyltransferase 5</fullName>
    </alternativeName>
</protein>
<name>GALT5_RAT</name>
<comment type="function">
    <text>Catalyzes the initial reaction in O-linked oligosaccharide biosynthesis, the transfer of an N-acetyl-D-galactosamine residue to a serine or threonine residue on the protein receptor. Has activity toward EA2 peptide substrate, but has a weak activity toward Muc2, Muc1b, rMuc-2 or mG-Muc substrates.</text>
</comment>
<comment type="catalytic activity">
    <reaction evidence="6">
        <text>L-seryl-[protein] + UDP-N-acetyl-alpha-D-galactosamine = a 3-O-[N-acetyl-alpha-D-galactosaminyl]-L-seryl-[protein] + UDP + H(+)</text>
        <dbReference type="Rhea" id="RHEA:23956"/>
        <dbReference type="Rhea" id="RHEA-COMP:9863"/>
        <dbReference type="Rhea" id="RHEA-COMP:12788"/>
        <dbReference type="ChEBI" id="CHEBI:15378"/>
        <dbReference type="ChEBI" id="CHEBI:29999"/>
        <dbReference type="ChEBI" id="CHEBI:53604"/>
        <dbReference type="ChEBI" id="CHEBI:58223"/>
        <dbReference type="ChEBI" id="CHEBI:67138"/>
        <dbReference type="EC" id="2.4.1.41"/>
    </reaction>
</comment>
<comment type="catalytic activity">
    <reaction evidence="6">
        <text>L-threonyl-[protein] + UDP-N-acetyl-alpha-D-galactosamine = a 3-O-[N-acetyl-alpha-D-galactosaminyl]-L-threonyl-[protein] + UDP + H(+)</text>
        <dbReference type="Rhea" id="RHEA:52424"/>
        <dbReference type="Rhea" id="RHEA-COMP:11060"/>
        <dbReference type="Rhea" id="RHEA-COMP:11689"/>
        <dbReference type="ChEBI" id="CHEBI:15378"/>
        <dbReference type="ChEBI" id="CHEBI:30013"/>
        <dbReference type="ChEBI" id="CHEBI:58223"/>
        <dbReference type="ChEBI" id="CHEBI:67138"/>
        <dbReference type="ChEBI" id="CHEBI:87075"/>
        <dbReference type="EC" id="2.4.1.41"/>
    </reaction>
</comment>
<comment type="cofactor">
    <cofactor evidence="1">
        <name>Mn(2+)</name>
        <dbReference type="ChEBI" id="CHEBI:29035"/>
    </cofactor>
</comment>
<comment type="pathway">
    <text>Protein modification; protein glycosylation.</text>
</comment>
<comment type="subunit">
    <text evidence="1">Interacts with EXT2. Does not interact with EXT1, EXTL1 or EXTL3 (By similarity).</text>
</comment>
<comment type="subcellular location">
    <subcellularLocation>
        <location evidence="1">Golgi apparatus membrane</location>
        <topology evidence="1">Single-pass type II membrane protein</topology>
    </subcellularLocation>
</comment>
<comment type="tissue specificity">
    <text evidence="6">Predominantly expressed in sublingual gland. Expressed at lower level in stomach and small intestine. Weakly or not expressed in submandibular gland, parotid gland, kidney, liver, heart, brain, spleen, lung, skeletal muscle, testis, ovary, cervix and uterus.</text>
</comment>
<comment type="domain">
    <text evidence="1">There are two conserved domains in the glycosyltransferase region: the N-terminal domain (domain A, also called GT1 motif), which is probably involved in manganese coordination and substrate binding and the C-terminal domain (domain B, also called Gal/GalNAc-T motif), which is probably involved in catalytic reaction and UDP-Gal binding.</text>
</comment>
<comment type="domain">
    <text evidence="1">The ricin B-type lectin domain binds to GalNAc and contributes to the glycopeptide specificity.</text>
</comment>
<comment type="similarity">
    <text evidence="7">Belongs to the glycosyltransferase 2 family. GalNAc-T subfamily.</text>
</comment>
<proteinExistence type="evidence at transcript level"/>